<dbReference type="EMBL" id="AY059518">
    <property type="status" value="NOT_ANNOTATED_CDS"/>
    <property type="molecule type" value="Genomic_RNA"/>
</dbReference>
<dbReference type="SMR" id="P0C5U5"/>
<dbReference type="IntAct" id="P0C5U5">
    <property type="interactions" value="2"/>
</dbReference>
<dbReference type="MINT" id="P0C5U5"/>
<dbReference type="Proteomes" id="UP000008285">
    <property type="component" value="Genome"/>
</dbReference>
<dbReference type="GO" id="GO:0044164">
    <property type="term" value="C:host cell cytosol"/>
    <property type="evidence" value="ECO:0007669"/>
    <property type="project" value="UniProtKB-SubCell"/>
</dbReference>
<dbReference type="GO" id="GO:0044192">
    <property type="term" value="C:host cell mitochondrial inner membrane"/>
    <property type="evidence" value="ECO:0007669"/>
    <property type="project" value="UniProtKB-SubCell"/>
</dbReference>
<dbReference type="GO" id="GO:0042025">
    <property type="term" value="C:host cell nucleus"/>
    <property type="evidence" value="ECO:0007669"/>
    <property type="project" value="UniProtKB-SubCell"/>
</dbReference>
<dbReference type="GO" id="GO:0016020">
    <property type="term" value="C:membrane"/>
    <property type="evidence" value="ECO:0007669"/>
    <property type="project" value="UniProtKB-UniRule"/>
</dbReference>
<dbReference type="GO" id="GO:0052150">
    <property type="term" value="P:symbiont-mediated perturbation of host apoptosis"/>
    <property type="evidence" value="ECO:0007669"/>
    <property type="project" value="UniProtKB-KW"/>
</dbReference>
<dbReference type="GO" id="GO:0039545">
    <property type="term" value="P:symbiont-mediated suppression of host cytoplasmic pattern recognition receptor signaling pathway via inhibition of MAVS activity"/>
    <property type="evidence" value="ECO:0007669"/>
    <property type="project" value="UniProtKB-KW"/>
</dbReference>
<dbReference type="HAMAP" id="MF_04064">
    <property type="entry name" value="INFV_PB1F2"/>
    <property type="match status" value="1"/>
</dbReference>
<dbReference type="InterPro" id="IPR021045">
    <property type="entry name" value="Flu_proapoptotic_PB1-F2"/>
</dbReference>
<dbReference type="Pfam" id="PF11986">
    <property type="entry name" value="PB1-F2"/>
    <property type="match status" value="1"/>
</dbReference>
<evidence type="ECO:0000255" key="1">
    <source>
        <dbReference type="HAMAP-Rule" id="MF_04064"/>
    </source>
</evidence>
<evidence type="ECO:0000256" key="2">
    <source>
        <dbReference type="SAM" id="MobiDB-lite"/>
    </source>
</evidence>
<sequence length="90" mass="10956">MEQEQDTPWTQSTEHINIQNRGNGQRTQRLEHPNSIRLMDHCLRIMSRVGMHRQIVYWKQWLSLKSPTQGSLKTRVLKRWKLFSKQEWIN</sequence>
<accession>P0C5U5</accession>
<comment type="function">
    <text evidence="1">Plays an important role in promoting lung pathology in both primary viral infection and secondary bacterial infection. Promotes alteration of mitochondrial morphology, dissipation of mitochondrial membrane potential, and cell death. Alternatively, inhibits the production of interferon in the infected cell at the level of host mitochondrial antiviral signaling MAVS. Its level of expression differs greatly depending on which cell type is infected, in a manner that is independent of the levels of expression of other viral proteins. Monocytic cells are more affected than epithelial cells. Seems to disable virus-infected monocytes or other host innate immune cells. During early stage of infection, predisposes the mitochondria to permeability transition through interaction with host SLC25A6/ANT3 and VDAC1. These proteins participate in the formation of the permeability transition pore complex (PTPC) responsible of the release of mitochondrial products that triggers apoptosis.</text>
</comment>
<comment type="subunit">
    <text evidence="1">Oligomer. Interacts with human SLC25A6/ANT3 and VDAC1. Interacts with host MAVS.</text>
</comment>
<comment type="interaction">
    <interactant intactId="EBI-7673978">
        <id>P0C5U5</id>
    </interactant>
    <interactant intactId="EBI-7674009">
        <id>Q8QPG7</id>
        <label>PB2</label>
    </interactant>
    <organismsDiffer>false</organismsDiffer>
    <experiments>4</experiments>
</comment>
<comment type="subcellular location">
    <subcellularLocation>
        <location evidence="1">Host mitochondrion inner membrane</location>
    </subcellularLocation>
    <subcellularLocation>
        <location evidence="1">Host nucleus</location>
    </subcellularLocation>
    <subcellularLocation>
        <location evidence="1">Host cytoplasm</location>
        <location evidence="1">Host cytosol</location>
    </subcellularLocation>
    <text evidence="1">Inner mitochondrial membrane in most cells types. Otherwise is detected in the nucleus and cytosol.</text>
</comment>
<comment type="miscellaneous">
    <text>Is not encoded in all strains, and seems to be dispensable for replication.</text>
</comment>
<comment type="similarity">
    <text evidence="1">Belongs to the influenza viruses PB1-F2 family.</text>
</comment>
<gene>
    <name evidence="1" type="primary">PB1</name>
</gene>
<proteinExistence type="evidence at protein level"/>
<organism>
    <name type="scientific">Influenza A virus (strain A/Duck/Hong Kong/2986.1/2000 H5N1 genotype C)</name>
    <dbReference type="NCBI Taxonomy" id="176674"/>
    <lineage>
        <taxon>Viruses</taxon>
        <taxon>Riboviria</taxon>
        <taxon>Orthornavirae</taxon>
        <taxon>Negarnaviricota</taxon>
        <taxon>Polyploviricotina</taxon>
        <taxon>Insthoviricetes</taxon>
        <taxon>Articulavirales</taxon>
        <taxon>Orthomyxoviridae</taxon>
        <taxon>Alphainfluenzavirus</taxon>
        <taxon>Alphainfluenzavirus influenzae</taxon>
        <taxon>Influenza A virus</taxon>
    </lineage>
</organism>
<reference key="1">
    <citation type="journal article" date="2002" name="Virology">
        <title>H5N1 influenza viruses isolated from geese in Southeastern China: evidence for genetic reassortment and interspecies transmission to ducks.</title>
        <authorList>
            <person name="Guan Y."/>
            <person name="Peiris M."/>
            <person name="Kong K.F."/>
            <person name="Dyrting K.C."/>
            <person name="Ellis T.M."/>
            <person name="Sit T."/>
            <person name="Zhang L.J."/>
            <person name="Shortridge K.F."/>
        </authorList>
    </citation>
    <scope>NUCLEOTIDE SEQUENCE [GENOMIC RNA]</scope>
</reference>
<feature type="chain" id="PRO_0000311636" description="Protein PB1-F2">
    <location>
        <begin position="1"/>
        <end position="90"/>
    </location>
</feature>
<feature type="region of interest" description="Disordered" evidence="2">
    <location>
        <begin position="1"/>
        <end position="32"/>
    </location>
</feature>
<feature type="region of interest" description="Mitochondrial targeting sequence" evidence="1">
    <location>
        <begin position="65"/>
        <end position="87"/>
    </location>
</feature>
<feature type="compositionally biased region" description="Polar residues" evidence="2">
    <location>
        <begin position="1"/>
        <end position="27"/>
    </location>
</feature>
<feature type="site" description="High pathogenicity" evidence="1">
    <location>
        <position position="66"/>
    </location>
</feature>
<keyword id="KW-0053">Apoptosis</keyword>
<keyword id="KW-1035">Host cytoplasm</keyword>
<keyword id="KW-1043">Host membrane</keyword>
<keyword id="KW-1045">Host mitochondrion</keyword>
<keyword id="KW-1046">Host mitochondrion inner membrane</keyword>
<keyword id="KW-1048">Host nucleus</keyword>
<keyword id="KW-0945">Host-virus interaction</keyword>
<keyword id="KW-1090">Inhibition of host innate immune response by virus</keyword>
<keyword id="KW-1097">Inhibition of host MAVS by virus</keyword>
<keyword id="KW-1113">Inhibition of host RLR pathway by virus</keyword>
<keyword id="KW-0472">Membrane</keyword>
<keyword id="KW-1119">Modulation of host cell apoptosis by virus</keyword>
<keyword id="KW-0899">Viral immunoevasion</keyword>
<protein>
    <recommendedName>
        <fullName evidence="1">Protein PB1-F2</fullName>
    </recommendedName>
</protein>
<organismHost>
    <name type="scientific">Aves</name>
    <dbReference type="NCBI Taxonomy" id="8782"/>
</organismHost>
<organismHost>
    <name type="scientific">Felis catus</name>
    <name type="common">Cat</name>
    <name type="synonym">Felis silvestris catus</name>
    <dbReference type="NCBI Taxonomy" id="9685"/>
</organismHost>
<organismHost>
    <name type="scientific">Homo sapiens</name>
    <name type="common">Human</name>
    <dbReference type="NCBI Taxonomy" id="9606"/>
</organismHost>
<organismHost>
    <name type="scientific">Panthera pardus</name>
    <name type="common">Leopard</name>
    <name type="synonym">Felis pardus</name>
    <dbReference type="NCBI Taxonomy" id="9691"/>
</organismHost>
<organismHost>
    <name type="scientific">Panthera tigris</name>
    <name type="common">Tiger</name>
    <dbReference type="NCBI Taxonomy" id="9694"/>
</organismHost>
<organismHost>
    <name type="scientific">Sus scrofa</name>
    <name type="common">Pig</name>
    <dbReference type="NCBI Taxonomy" id="9823"/>
</organismHost>
<name>PB1F2_I00A0</name>